<feature type="chain" id="PRO_0000353177" description="2-keto-3-deoxy-L-rhamnonate aldolase">
    <location>
        <begin position="1"/>
        <end position="267"/>
    </location>
</feature>
<feature type="active site" description="Proton acceptor" evidence="1">
    <location>
        <position position="49"/>
    </location>
</feature>
<feature type="binding site" evidence="1">
    <location>
        <position position="151"/>
    </location>
    <ligand>
        <name>substrate</name>
    </ligand>
</feature>
<feature type="binding site" evidence="1">
    <location>
        <position position="153"/>
    </location>
    <ligand>
        <name>Mg(2+)</name>
        <dbReference type="ChEBI" id="CHEBI:18420"/>
    </ligand>
</feature>
<feature type="binding site" evidence="1">
    <location>
        <position position="178"/>
    </location>
    <ligand>
        <name>substrate</name>
    </ligand>
</feature>
<feature type="binding site" evidence="1">
    <location>
        <position position="179"/>
    </location>
    <ligand>
        <name>Mg(2+)</name>
        <dbReference type="ChEBI" id="CHEBI:18420"/>
    </ligand>
</feature>
<feature type="binding site" evidence="1">
    <location>
        <position position="179"/>
    </location>
    <ligand>
        <name>substrate</name>
    </ligand>
</feature>
<feature type="site" description="Transition state stabilizer" evidence="1">
    <location>
        <position position="74"/>
    </location>
</feature>
<feature type="site" description="Increases basicity of active site His" evidence="1">
    <location>
        <position position="88"/>
    </location>
</feature>
<name>RHMA_SALTY</name>
<keyword id="KW-0456">Lyase</keyword>
<keyword id="KW-0460">Magnesium</keyword>
<keyword id="KW-0479">Metal-binding</keyword>
<keyword id="KW-1185">Reference proteome</keyword>
<gene>
    <name evidence="1" type="primary">rhmA</name>
    <name type="ordered locus">STM2289</name>
</gene>
<accession>Q8ZNG0</accession>
<comment type="function">
    <text evidence="1">Catalyzes the reversible retro-aldol cleavage of 2-keto-3-deoxy-L-rhamnonate (KDR) to pyruvate and lactaldehyde.</text>
</comment>
<comment type="catalytic activity">
    <reaction evidence="1">
        <text>2-dehydro-3-deoxy-L-rhamnonate = (S)-lactaldehyde + pyruvate</text>
        <dbReference type="Rhea" id="RHEA:25784"/>
        <dbReference type="ChEBI" id="CHEBI:15361"/>
        <dbReference type="ChEBI" id="CHEBI:18041"/>
        <dbReference type="ChEBI" id="CHEBI:58371"/>
        <dbReference type="EC" id="4.1.2.53"/>
    </reaction>
</comment>
<comment type="cofactor">
    <cofactor evidence="1">
        <name>Mg(2+)</name>
        <dbReference type="ChEBI" id="CHEBI:18420"/>
    </cofactor>
    <text evidence="1">Binds 1 Mg(2+) ion per subunit.</text>
</comment>
<comment type="subunit">
    <text evidence="1">Homohexamer.</text>
</comment>
<comment type="similarity">
    <text evidence="1">Belongs to the HpcH/HpaI aldolase family. KDR aldolase subfamily.</text>
</comment>
<dbReference type="EC" id="4.1.2.53" evidence="1"/>
<dbReference type="EMBL" id="AE006468">
    <property type="protein sequence ID" value="AAL21190.1"/>
    <property type="molecule type" value="Genomic_DNA"/>
</dbReference>
<dbReference type="RefSeq" id="NP_461231.1">
    <property type="nucleotide sequence ID" value="NC_003197.2"/>
</dbReference>
<dbReference type="SMR" id="Q8ZNG0"/>
<dbReference type="STRING" id="99287.STM2289"/>
<dbReference type="PaxDb" id="99287-STM2289"/>
<dbReference type="GeneID" id="1253811"/>
<dbReference type="KEGG" id="stm:STM2289"/>
<dbReference type="PATRIC" id="fig|99287.12.peg.2423"/>
<dbReference type="HOGENOM" id="CLU_059964_1_0_6"/>
<dbReference type="OMA" id="HYLALGC"/>
<dbReference type="PhylomeDB" id="Q8ZNG0"/>
<dbReference type="BioCyc" id="SENT99287:STM2289-MONOMER"/>
<dbReference type="Proteomes" id="UP000001014">
    <property type="component" value="Chromosome"/>
</dbReference>
<dbReference type="GO" id="GO:0005737">
    <property type="term" value="C:cytoplasm"/>
    <property type="evidence" value="ECO:0000318"/>
    <property type="project" value="GO_Central"/>
</dbReference>
<dbReference type="GO" id="GO:0106099">
    <property type="term" value="F:2-keto-3-deoxy-L-rhamnonate aldolase activity"/>
    <property type="evidence" value="ECO:0007669"/>
    <property type="project" value="UniProtKB-EC"/>
</dbReference>
<dbReference type="GO" id="GO:0016832">
    <property type="term" value="F:aldehyde-lyase activity"/>
    <property type="evidence" value="ECO:0000318"/>
    <property type="project" value="GO_Central"/>
</dbReference>
<dbReference type="GO" id="GO:0000287">
    <property type="term" value="F:magnesium ion binding"/>
    <property type="evidence" value="ECO:0007669"/>
    <property type="project" value="UniProtKB-UniRule"/>
</dbReference>
<dbReference type="FunFam" id="3.20.20.60:FF:000004">
    <property type="entry name" value="5-keto-4-deoxy-D-glucarate aldolase"/>
    <property type="match status" value="1"/>
</dbReference>
<dbReference type="Gene3D" id="3.20.20.60">
    <property type="entry name" value="Phosphoenolpyruvate-binding domains"/>
    <property type="match status" value="1"/>
</dbReference>
<dbReference type="HAMAP" id="MF_01290">
    <property type="entry name" value="KDR_aldolase"/>
    <property type="match status" value="1"/>
</dbReference>
<dbReference type="InterPro" id="IPR005000">
    <property type="entry name" value="Aldolase/citrate-lyase_domain"/>
</dbReference>
<dbReference type="InterPro" id="IPR050251">
    <property type="entry name" value="HpcH-HpaI_aldolase"/>
</dbReference>
<dbReference type="InterPro" id="IPR023593">
    <property type="entry name" value="KDR_aldolase"/>
</dbReference>
<dbReference type="InterPro" id="IPR015813">
    <property type="entry name" value="Pyrv/PenolPyrv_kinase-like_dom"/>
</dbReference>
<dbReference type="InterPro" id="IPR040442">
    <property type="entry name" value="Pyrv_kinase-like_dom_sf"/>
</dbReference>
<dbReference type="NCBIfam" id="NF007521">
    <property type="entry name" value="PRK10128.1"/>
    <property type="match status" value="1"/>
</dbReference>
<dbReference type="PANTHER" id="PTHR30502">
    <property type="entry name" value="2-KETO-3-DEOXY-L-RHAMNONATE ALDOLASE"/>
    <property type="match status" value="1"/>
</dbReference>
<dbReference type="PANTHER" id="PTHR30502:SF5">
    <property type="entry name" value="2-KETO-3-DEOXY-L-RHAMNONATE ALDOLASE"/>
    <property type="match status" value="1"/>
</dbReference>
<dbReference type="Pfam" id="PF03328">
    <property type="entry name" value="HpcH_HpaI"/>
    <property type="match status" value="1"/>
</dbReference>
<dbReference type="SUPFAM" id="SSF51621">
    <property type="entry name" value="Phosphoenolpyruvate/pyruvate domain"/>
    <property type="match status" value="1"/>
</dbReference>
<evidence type="ECO:0000255" key="1">
    <source>
        <dbReference type="HAMAP-Rule" id="MF_01290"/>
    </source>
</evidence>
<protein>
    <recommendedName>
        <fullName evidence="1">2-keto-3-deoxy-L-rhamnonate aldolase</fullName>
        <shortName evidence="1">KDR aldolase</shortName>
        <ecNumber evidence="1">4.1.2.53</ecNumber>
    </recommendedName>
    <alternativeName>
        <fullName evidence="1">2-dehydro-3-deoxyrhamnonate aldolase</fullName>
    </alternativeName>
</protein>
<reference key="1">
    <citation type="journal article" date="2001" name="Nature">
        <title>Complete genome sequence of Salmonella enterica serovar Typhimurium LT2.</title>
        <authorList>
            <person name="McClelland M."/>
            <person name="Sanderson K.E."/>
            <person name="Spieth J."/>
            <person name="Clifton S.W."/>
            <person name="Latreille P."/>
            <person name="Courtney L."/>
            <person name="Porwollik S."/>
            <person name="Ali J."/>
            <person name="Dante M."/>
            <person name="Du F."/>
            <person name="Hou S."/>
            <person name="Layman D."/>
            <person name="Leonard S."/>
            <person name="Nguyen C."/>
            <person name="Scott K."/>
            <person name="Holmes A."/>
            <person name="Grewal N."/>
            <person name="Mulvaney E."/>
            <person name="Ryan E."/>
            <person name="Sun H."/>
            <person name="Florea L."/>
            <person name="Miller W."/>
            <person name="Stoneking T."/>
            <person name="Nhan M."/>
            <person name="Waterston R."/>
            <person name="Wilson R.K."/>
        </authorList>
    </citation>
    <scope>NUCLEOTIDE SEQUENCE [LARGE SCALE GENOMIC DNA]</scope>
    <source>
        <strain>LT2 / SGSC1412 / ATCC 700720</strain>
    </source>
</reference>
<sequence>MNALLSNPFKEGLRKGDTQIGLWLSSTTSYMAEIAATSGYDWLLIDGEHAPNTVQDLYHQLQAIAPYASQPVIRPIEGSKALIKQVLDIGAQTLLIPMVDTAEQARQVVSATRYPPLGQRGVGASVARAARWGRIDNYMAQANESLCLLVQVESKVALENLDAILEVEGIDGVFIGPADLSASLGYPDNAGHPEVQRIIEACIYRIRAAGKAAGFLAVDPAMAQKCLAWGANFVAVGVDTMLYTEALDSRLAMFKSVQSVSTAKRSY</sequence>
<proteinExistence type="inferred from homology"/>
<organism>
    <name type="scientific">Salmonella typhimurium (strain LT2 / SGSC1412 / ATCC 700720)</name>
    <dbReference type="NCBI Taxonomy" id="99287"/>
    <lineage>
        <taxon>Bacteria</taxon>
        <taxon>Pseudomonadati</taxon>
        <taxon>Pseudomonadota</taxon>
        <taxon>Gammaproteobacteria</taxon>
        <taxon>Enterobacterales</taxon>
        <taxon>Enterobacteriaceae</taxon>
        <taxon>Salmonella</taxon>
    </lineage>
</organism>